<protein>
    <recommendedName>
        <fullName>Single myb histone 1</fullName>
    </recommendedName>
    <alternativeName>
        <fullName>Protein SINGLE MYB HISTONE1</fullName>
    </alternativeName>
</protein>
<name>SMH1_MAIZE</name>
<proteinExistence type="evidence at transcript level"/>
<gene>
    <name type="primary">SMH1</name>
    <name type="ORF">ZEAMMB73_836537</name>
</gene>
<sequence>MGAPKQRWTPEEEAALKAGVAKHGPGKWRTILRDSDFSALLRLRSNVDLKDKWRNLSVTAGGYGSREKARMALKKGRRVVPKLTAEPMDVDVKDMDDAHDTAIDVEPLAMAFESLPTEESPDKSVARLDDLILEAIRKLKEPSGPSKAAIAAYIEDQYWPPADFQRLLSTKLKALVNSGKLIKVNQKYRIAPSPPPSGRIGTKVSSAEGMKAENNNAKRLTKHQVIAELEKMKGMTKEEAAAFAAKAVAEAEVAIAEAEEAARVAEAAENDAEAAKAFLDAVTLSMRNRNAASMMLRAC</sequence>
<accession>Q6WS85</accession>
<accession>B6TMI8</accession>
<accession>Q6VSV4</accession>
<keyword id="KW-0158">Chromosome</keyword>
<keyword id="KW-0175">Coiled coil</keyword>
<keyword id="KW-0238">DNA-binding</keyword>
<keyword id="KW-0539">Nucleus</keyword>
<keyword id="KW-1185">Reference proteome</keyword>
<keyword id="KW-0779">Telomere</keyword>
<keyword id="KW-0804">Transcription</keyword>
<keyword id="KW-0805">Transcription regulation</keyword>
<organism>
    <name type="scientific">Zea mays</name>
    <name type="common">Maize</name>
    <dbReference type="NCBI Taxonomy" id="4577"/>
    <lineage>
        <taxon>Eukaryota</taxon>
        <taxon>Viridiplantae</taxon>
        <taxon>Streptophyta</taxon>
        <taxon>Embryophyta</taxon>
        <taxon>Tracheophyta</taxon>
        <taxon>Spermatophyta</taxon>
        <taxon>Magnoliopsida</taxon>
        <taxon>Liliopsida</taxon>
        <taxon>Poales</taxon>
        <taxon>Poaceae</taxon>
        <taxon>PACMAD clade</taxon>
        <taxon>Panicoideae</taxon>
        <taxon>Andropogonodae</taxon>
        <taxon>Andropogoneae</taxon>
        <taxon>Tripsacinae</taxon>
        <taxon>Zea</taxon>
    </lineage>
</organism>
<comment type="function">
    <text evidence="5">Binds preferentially double-stranded telomeric repeats 5'-TTTAGGG-3', but can also bind to the single G-rich and C-rich telomeric strand.</text>
</comment>
<comment type="subunit">
    <text evidence="1">Forms a homodimer and heterodimers.</text>
</comment>
<comment type="subcellular location">
    <subcellularLocation>
        <location evidence="3 4">Nucleus</location>
    </subcellularLocation>
    <subcellularLocation>
        <location evidence="4">Chromosome</location>
    </subcellularLocation>
    <subcellularLocation>
        <location evidence="1">Nucleus</location>
        <location evidence="1">Nucleolus</location>
    </subcellularLocation>
    <subcellularLocation>
        <location evidence="6">Chromosome</location>
        <location evidence="6">Telomere</location>
    </subcellularLocation>
    <text evidence="1">Localized to the nucleolus during interphase.</text>
</comment>
<comment type="tissue specificity">
    <text evidence="5">Expressed in leaves.</text>
</comment>
<comment type="domain">
    <text evidence="1">HTH myb-type domain confers double-stranded telomeric DNA-binding while the H15 domain is involved in non-specific DNA-protein interaction and multimerization.</text>
</comment>
<comment type="similarity">
    <text evidence="4">Belongs to the histone H1/H5 family. SMH subfamily.</text>
</comment>
<reference key="1">
    <citation type="journal article" date="2003" name="Plant Physiol.">
        <title>The maize Single myb histone 1 gene, Smh1, belongs to a novel gene family and encodes a protein that binds telomere DNA repeats in vitro.</title>
        <authorList>
            <person name="Marian C.O."/>
            <person name="Bordoli S.J."/>
            <person name="Goltz M."/>
            <person name="Santarella R.A."/>
            <person name="Jackson L.P."/>
            <person name="Danilevskaya O."/>
            <person name="Beckstette M."/>
            <person name="Meeley R."/>
            <person name="Bass H.W."/>
        </authorList>
    </citation>
    <scope>NUCLEOTIDE SEQUENCE [GENOMIC DNA / MRNA]</scope>
    <scope>FUNCTION</scope>
    <scope>TISSUE SPECIFICITY</scope>
    <scope>GENE FAMILY</scope>
    <scope>NOMENCLATURE</scope>
    <source>
        <strain>cv. B73</strain>
        <strain>cv. Missouri 17</strain>
        <tissue>Mesocotyl</tissue>
    </source>
</reference>
<reference key="2">
    <citation type="journal article" date="2009" name="Science">
        <title>The B73 maize genome: complexity, diversity, and dynamics.</title>
        <authorList>
            <person name="Schnable P.S."/>
            <person name="Ware D."/>
            <person name="Fulton R.S."/>
            <person name="Stein J.C."/>
            <person name="Wei F."/>
            <person name="Pasternak S."/>
            <person name="Liang C."/>
            <person name="Zhang J."/>
            <person name="Fulton L."/>
            <person name="Graves T.A."/>
            <person name="Minx P."/>
            <person name="Reily A.D."/>
            <person name="Courtney L."/>
            <person name="Kruchowski S.S."/>
            <person name="Tomlinson C."/>
            <person name="Strong C."/>
            <person name="Delehaunty K."/>
            <person name="Fronick C."/>
            <person name="Courtney B."/>
            <person name="Rock S.M."/>
            <person name="Belter E."/>
            <person name="Du F."/>
            <person name="Kim K."/>
            <person name="Abbott R.M."/>
            <person name="Cotton M."/>
            <person name="Levy A."/>
            <person name="Marchetto P."/>
            <person name="Ochoa K."/>
            <person name="Jackson S.M."/>
            <person name="Gillam B."/>
            <person name="Chen W."/>
            <person name="Yan L."/>
            <person name="Higginbotham J."/>
            <person name="Cardenas M."/>
            <person name="Waligorski J."/>
            <person name="Applebaum E."/>
            <person name="Phelps L."/>
            <person name="Falcone J."/>
            <person name="Kanchi K."/>
            <person name="Thane T."/>
            <person name="Scimone A."/>
            <person name="Thane N."/>
            <person name="Henke J."/>
            <person name="Wang T."/>
            <person name="Ruppert J."/>
            <person name="Shah N."/>
            <person name="Rotter K."/>
            <person name="Hodges J."/>
            <person name="Ingenthron E."/>
            <person name="Cordes M."/>
            <person name="Kohlberg S."/>
            <person name="Sgro J."/>
            <person name="Delgado B."/>
            <person name="Mead K."/>
            <person name="Chinwalla A."/>
            <person name="Leonard S."/>
            <person name="Crouse K."/>
            <person name="Collura K."/>
            <person name="Kudrna D."/>
            <person name="Currie J."/>
            <person name="He R."/>
            <person name="Angelova A."/>
            <person name="Rajasekar S."/>
            <person name="Mueller T."/>
            <person name="Lomeli R."/>
            <person name="Scara G."/>
            <person name="Ko A."/>
            <person name="Delaney K."/>
            <person name="Wissotski M."/>
            <person name="Lopez G."/>
            <person name="Campos D."/>
            <person name="Braidotti M."/>
            <person name="Ashley E."/>
            <person name="Golser W."/>
            <person name="Kim H."/>
            <person name="Lee S."/>
            <person name="Lin J."/>
            <person name="Dujmic Z."/>
            <person name="Kim W."/>
            <person name="Talag J."/>
            <person name="Zuccolo A."/>
            <person name="Fan C."/>
            <person name="Sebastian A."/>
            <person name="Kramer M."/>
            <person name="Spiegel L."/>
            <person name="Nascimento L."/>
            <person name="Zutavern T."/>
            <person name="Miller B."/>
            <person name="Ambroise C."/>
            <person name="Muller S."/>
            <person name="Spooner W."/>
            <person name="Narechania A."/>
            <person name="Ren L."/>
            <person name="Wei S."/>
            <person name="Kumari S."/>
            <person name="Faga B."/>
            <person name="Levy M.J."/>
            <person name="McMahan L."/>
            <person name="Van Buren P."/>
            <person name="Vaughn M.W."/>
            <person name="Ying K."/>
            <person name="Yeh C.-T."/>
            <person name="Emrich S.J."/>
            <person name="Jia Y."/>
            <person name="Kalyanaraman A."/>
            <person name="Hsia A.-P."/>
            <person name="Barbazuk W.B."/>
            <person name="Baucom R.S."/>
            <person name="Brutnell T.P."/>
            <person name="Carpita N.C."/>
            <person name="Chaparro C."/>
            <person name="Chia J.-M."/>
            <person name="Deragon J.-M."/>
            <person name="Estill J.C."/>
            <person name="Fu Y."/>
            <person name="Jeddeloh J.A."/>
            <person name="Han Y."/>
            <person name="Lee H."/>
            <person name="Li P."/>
            <person name="Lisch D.R."/>
            <person name="Liu S."/>
            <person name="Liu Z."/>
            <person name="Nagel D.H."/>
            <person name="McCann M.C."/>
            <person name="SanMiguel P."/>
            <person name="Myers A.M."/>
            <person name="Nettleton D."/>
            <person name="Nguyen J."/>
            <person name="Penning B.W."/>
            <person name="Ponnala L."/>
            <person name="Schneider K.L."/>
            <person name="Schwartz D.C."/>
            <person name="Sharma A."/>
            <person name="Soderlund C."/>
            <person name="Springer N.M."/>
            <person name="Sun Q."/>
            <person name="Wang H."/>
            <person name="Waterman M."/>
            <person name="Westerman R."/>
            <person name="Wolfgruber T.K."/>
            <person name="Yang L."/>
            <person name="Yu Y."/>
            <person name="Zhang L."/>
            <person name="Zhou S."/>
            <person name="Zhu Q."/>
            <person name="Bennetzen J.L."/>
            <person name="Dawe R.K."/>
            <person name="Jiang J."/>
            <person name="Jiang N."/>
            <person name="Presting G.G."/>
            <person name="Wessler S.R."/>
            <person name="Aluru S."/>
            <person name="Martienssen R.A."/>
            <person name="Clifton S.W."/>
            <person name="McCombie W.R."/>
            <person name="Wing R.A."/>
            <person name="Wilson R.K."/>
        </authorList>
    </citation>
    <scope>NUCLEOTIDE SEQUENCE [LARGE SCALE GENOMIC DNA]</scope>
    <source>
        <strain>cv. B73</strain>
    </source>
</reference>
<reference key="3">
    <citation type="journal article" date="2009" name="Plant Mol. Biol.">
        <title>Insights into corn genes derived from large-scale cDNA sequencing.</title>
        <authorList>
            <person name="Alexandrov N.N."/>
            <person name="Brover V.V."/>
            <person name="Freidin S."/>
            <person name="Troukhan M.E."/>
            <person name="Tatarinova T.V."/>
            <person name="Zhang H."/>
            <person name="Swaller T.J."/>
            <person name="Lu Y.-P."/>
            <person name="Bouck J."/>
            <person name="Flavell R.B."/>
            <person name="Feldmann K.A."/>
        </authorList>
    </citation>
    <scope>NUCLEOTIDE SEQUENCE [LARGE SCALE MRNA]</scope>
</reference>
<reference key="4">
    <citation type="journal article" date="2009" name="PLoS Genet.">
        <title>Sequencing, mapping, and analysis of 27,455 maize full-length cDNAs.</title>
        <authorList>
            <person name="Soderlund C."/>
            <person name="Descour A."/>
            <person name="Kudrna D."/>
            <person name="Bomhoff M."/>
            <person name="Boyd L."/>
            <person name="Currie J."/>
            <person name="Angelova A."/>
            <person name="Collura K."/>
            <person name="Wissotski M."/>
            <person name="Ashley E."/>
            <person name="Morrow D."/>
            <person name="Fernandes J."/>
            <person name="Walbot V."/>
            <person name="Yu Y."/>
        </authorList>
    </citation>
    <scope>NUCLEOTIDE SEQUENCE [LARGE SCALE MRNA]</scope>
    <source>
        <strain>cv. B73</strain>
    </source>
</reference>
<evidence type="ECO:0000250" key="1"/>
<evidence type="ECO:0000255" key="2"/>
<evidence type="ECO:0000255" key="3">
    <source>
        <dbReference type="PROSITE-ProRule" id="PRU00625"/>
    </source>
</evidence>
<evidence type="ECO:0000255" key="4">
    <source>
        <dbReference type="PROSITE-ProRule" id="PRU00837"/>
    </source>
</evidence>
<evidence type="ECO:0000269" key="5">
    <source>
    </source>
</evidence>
<evidence type="ECO:0000305" key="6"/>
<feature type="chain" id="PRO_0000429013" description="Single myb histone 1">
    <location>
        <begin position="1"/>
        <end position="299"/>
    </location>
</feature>
<feature type="domain" description="HTH myb-type" evidence="3">
    <location>
        <begin position="1"/>
        <end position="61"/>
    </location>
</feature>
<feature type="domain" description="H15" evidence="4">
    <location>
        <begin position="124"/>
        <end position="192"/>
    </location>
</feature>
<feature type="DNA-binding region" description="H-T-H motif" evidence="3">
    <location>
        <begin position="28"/>
        <end position="57"/>
    </location>
</feature>
<feature type="coiled-coil region" evidence="2">
    <location>
        <begin position="238"/>
        <end position="279"/>
    </location>
</feature>
<feature type="sequence conflict" description="In Ref. 3; ACG38321." evidence="6" ref="3">
    <original>Q</original>
    <variation>H</variation>
    <location>
        <position position="6"/>
    </location>
</feature>
<feature type="sequence conflict" description="In Ref. 3; ACG38321." evidence="6" ref="3">
    <original>D</original>
    <variation>N</variation>
    <location>
        <position position="94"/>
    </location>
</feature>
<feature type="sequence conflict" description="In Ref. 3; ACG38321." evidence="6" ref="3">
    <original>P</original>
    <variation>S</variation>
    <location>
        <position position="145"/>
    </location>
</feature>
<dbReference type="EMBL" id="AY271659">
    <property type="protein sequence ID" value="AAQ01754.1"/>
    <property type="molecule type" value="mRNA"/>
</dbReference>
<dbReference type="EMBL" id="AY328854">
    <property type="protein sequence ID" value="AAR01211.1"/>
    <property type="molecule type" value="Genomic_DNA"/>
</dbReference>
<dbReference type="EMBL" id="CM000784">
    <property type="protein sequence ID" value="AFW83118.1"/>
    <property type="molecule type" value="Genomic_DNA"/>
</dbReference>
<dbReference type="EMBL" id="EU966203">
    <property type="protein sequence ID" value="ACG38321.1"/>
    <property type="molecule type" value="mRNA"/>
</dbReference>
<dbReference type="EMBL" id="BT042177">
    <property type="protein sequence ID" value="ACF87182.1"/>
    <property type="molecule type" value="mRNA"/>
</dbReference>
<dbReference type="RefSeq" id="NP_001141858.1">
    <property type="nucleotide sequence ID" value="NM_001148386.1"/>
</dbReference>
<dbReference type="SMR" id="Q6WS85"/>
<dbReference type="FunCoup" id="Q6WS85">
    <property type="interactions" value="73"/>
</dbReference>
<dbReference type="STRING" id="4577.Q6WS85"/>
<dbReference type="PaxDb" id="4577-GRMZM2G136887_P02"/>
<dbReference type="EnsemblPlants" id="Zm00001eb357490_T003">
    <property type="protein sequence ID" value="Zm00001eb357490_P003"/>
    <property type="gene ID" value="Zm00001eb357490"/>
</dbReference>
<dbReference type="GeneID" id="100274000"/>
<dbReference type="Gramene" id="Zm00001eb357490_T003">
    <property type="protein sequence ID" value="Zm00001eb357490_P003"/>
    <property type="gene ID" value="Zm00001eb357490"/>
</dbReference>
<dbReference type="KEGG" id="zma:100274000"/>
<dbReference type="MaizeGDB" id="894674"/>
<dbReference type="eggNOG" id="ENOG502QSU2">
    <property type="taxonomic scope" value="Eukaryota"/>
</dbReference>
<dbReference type="HOGENOM" id="CLU_047477_0_1_1"/>
<dbReference type="InParanoid" id="Q6WS85"/>
<dbReference type="OMA" id="MISECPE"/>
<dbReference type="OrthoDB" id="608866at2759"/>
<dbReference type="Proteomes" id="UP000007305">
    <property type="component" value="Chromosome 8"/>
</dbReference>
<dbReference type="ExpressionAtlas" id="Q6WS85">
    <property type="expression patterns" value="baseline and differential"/>
</dbReference>
<dbReference type="GO" id="GO:0000785">
    <property type="term" value="C:chromatin"/>
    <property type="evidence" value="ECO:0000250"/>
    <property type="project" value="UniProtKB"/>
</dbReference>
<dbReference type="GO" id="GO:0000781">
    <property type="term" value="C:chromosome, telomeric region"/>
    <property type="evidence" value="ECO:0007669"/>
    <property type="project" value="UniProtKB-SubCell"/>
</dbReference>
<dbReference type="GO" id="GO:0005730">
    <property type="term" value="C:nucleolus"/>
    <property type="evidence" value="ECO:0000250"/>
    <property type="project" value="UniProtKB"/>
</dbReference>
<dbReference type="GO" id="GO:0000786">
    <property type="term" value="C:nucleosome"/>
    <property type="evidence" value="ECO:0007669"/>
    <property type="project" value="InterPro"/>
</dbReference>
<dbReference type="GO" id="GO:0005634">
    <property type="term" value="C:nucleus"/>
    <property type="evidence" value="ECO:0000250"/>
    <property type="project" value="UniProtKB"/>
</dbReference>
<dbReference type="GO" id="GO:0003691">
    <property type="term" value="F:double-stranded telomeric DNA binding"/>
    <property type="evidence" value="ECO:0000314"/>
    <property type="project" value="UniProtKB"/>
</dbReference>
<dbReference type="GO" id="GO:0042803">
    <property type="term" value="F:protein homodimerization activity"/>
    <property type="evidence" value="ECO:0000250"/>
    <property type="project" value="UniProtKB"/>
</dbReference>
<dbReference type="GO" id="GO:0043047">
    <property type="term" value="F:single-stranded telomeric DNA binding"/>
    <property type="evidence" value="ECO:0000314"/>
    <property type="project" value="UniProtKB"/>
</dbReference>
<dbReference type="GO" id="GO:0006334">
    <property type="term" value="P:nucleosome assembly"/>
    <property type="evidence" value="ECO:0007669"/>
    <property type="project" value="InterPro"/>
</dbReference>
<dbReference type="CDD" id="cd11660">
    <property type="entry name" value="SANT_TRF"/>
    <property type="match status" value="1"/>
</dbReference>
<dbReference type="FunFam" id="1.10.10.10:FF:000937">
    <property type="entry name" value="Telomere repeat-binding factor 1"/>
    <property type="match status" value="1"/>
</dbReference>
<dbReference type="FunFam" id="1.10.10.60:FF:000168">
    <property type="entry name" value="Telomere repeat-binding factor 1"/>
    <property type="match status" value="1"/>
</dbReference>
<dbReference type="Gene3D" id="1.10.10.60">
    <property type="entry name" value="Homeodomain-like"/>
    <property type="match status" value="1"/>
</dbReference>
<dbReference type="Gene3D" id="1.10.10.10">
    <property type="entry name" value="Winged helix-like DNA-binding domain superfamily/Winged helix DNA-binding domain"/>
    <property type="match status" value="1"/>
</dbReference>
<dbReference type="InterPro" id="IPR005818">
    <property type="entry name" value="Histone_H1/H5_H15"/>
</dbReference>
<dbReference type="InterPro" id="IPR009057">
    <property type="entry name" value="Homeodomain-like_sf"/>
</dbReference>
<dbReference type="InterPro" id="IPR017930">
    <property type="entry name" value="Myb_dom"/>
</dbReference>
<dbReference type="InterPro" id="IPR001005">
    <property type="entry name" value="SANT/Myb"/>
</dbReference>
<dbReference type="InterPro" id="IPR044597">
    <property type="entry name" value="SMH1-6"/>
</dbReference>
<dbReference type="InterPro" id="IPR036388">
    <property type="entry name" value="WH-like_DNA-bd_sf"/>
</dbReference>
<dbReference type="InterPro" id="IPR036390">
    <property type="entry name" value="WH_DNA-bd_sf"/>
</dbReference>
<dbReference type="PANTHER" id="PTHR46267:SF2">
    <property type="entry name" value="SINGLE MYB HISTONE 1"/>
    <property type="match status" value="1"/>
</dbReference>
<dbReference type="PANTHER" id="PTHR46267">
    <property type="entry name" value="SINGLE MYB HISTONE 4"/>
    <property type="match status" value="1"/>
</dbReference>
<dbReference type="Pfam" id="PF00538">
    <property type="entry name" value="Linker_histone"/>
    <property type="match status" value="1"/>
</dbReference>
<dbReference type="Pfam" id="PF00249">
    <property type="entry name" value="Myb_DNA-binding"/>
    <property type="match status" value="1"/>
</dbReference>
<dbReference type="SMART" id="SM00526">
    <property type="entry name" value="H15"/>
    <property type="match status" value="1"/>
</dbReference>
<dbReference type="SMART" id="SM00717">
    <property type="entry name" value="SANT"/>
    <property type="match status" value="1"/>
</dbReference>
<dbReference type="SUPFAM" id="SSF46689">
    <property type="entry name" value="Homeodomain-like"/>
    <property type="match status" value="1"/>
</dbReference>
<dbReference type="SUPFAM" id="SSF46785">
    <property type="entry name" value="Winged helix' DNA-binding domain"/>
    <property type="match status" value="1"/>
</dbReference>
<dbReference type="PROSITE" id="PS51504">
    <property type="entry name" value="H15"/>
    <property type="match status" value="1"/>
</dbReference>
<dbReference type="PROSITE" id="PS51294">
    <property type="entry name" value="HTH_MYB"/>
    <property type="match status" value="1"/>
</dbReference>